<keyword id="KW-0067">ATP-binding</keyword>
<keyword id="KW-0963">Cytoplasm</keyword>
<keyword id="KW-0418">Kinase</keyword>
<keyword id="KW-0547">Nucleotide-binding</keyword>
<keyword id="KW-1185">Reference proteome</keyword>
<keyword id="KW-0808">Transferase</keyword>
<organism>
    <name type="scientific">Shewanella violacea (strain JCM 10179 / CIP 106290 / LMG 19151 / DSS12)</name>
    <dbReference type="NCBI Taxonomy" id="637905"/>
    <lineage>
        <taxon>Bacteria</taxon>
        <taxon>Pseudomonadati</taxon>
        <taxon>Pseudomonadota</taxon>
        <taxon>Gammaproteobacteria</taxon>
        <taxon>Alteromonadales</taxon>
        <taxon>Shewanellaceae</taxon>
        <taxon>Shewanella</taxon>
    </lineage>
</organism>
<reference key="1">
    <citation type="submission" date="2003-07" db="EMBL/GenBank/DDBJ databases">
        <title>Cloning and purification of the rpoZ gene encoding RNA polymerase omega subunit from deep-sea piezophilic bacterium, Shewanella violacea strain DSS12.</title>
        <authorList>
            <person name="Kawano H."/>
            <person name="Suzaki Y."/>
            <person name="Fukuchi J."/>
            <person name="Nakasone K."/>
            <person name="Abe F."/>
            <person name="Kato C."/>
            <person name="Yoshida Y."/>
            <person name="Usami R."/>
            <person name="Horikoshi K."/>
        </authorList>
    </citation>
    <scope>NUCLEOTIDE SEQUENCE [GENOMIC DNA]</scope>
</reference>
<reference key="2">
    <citation type="journal article" date="2010" name="Mol. Biosyst.">
        <title>Complete genome sequence and comparative analysis of Shewanella violacea, a psychrophilic and piezophilic bacterium from deep sea floor sediments.</title>
        <authorList>
            <person name="Aono E."/>
            <person name="Baba T."/>
            <person name="Ara T."/>
            <person name="Nishi T."/>
            <person name="Nakamichi T."/>
            <person name="Inamoto E."/>
            <person name="Toyonaga H."/>
            <person name="Hasegawa M."/>
            <person name="Takai Y."/>
            <person name="Okumura Y."/>
            <person name="Baba M."/>
            <person name="Tomita M."/>
            <person name="Kato C."/>
            <person name="Oshima T."/>
            <person name="Nakasone K."/>
            <person name="Mori H."/>
        </authorList>
    </citation>
    <scope>NUCLEOTIDE SEQUENCE [LARGE SCALE GENOMIC DNA]</scope>
    <source>
        <strain>JCM 10179 / CIP 106290 / LMG 19151 / DSS12</strain>
    </source>
</reference>
<feature type="chain" id="PRO_0000170601" description="Guanylate kinase">
    <location>
        <begin position="1"/>
        <end position="207"/>
    </location>
</feature>
<feature type="domain" description="Guanylate kinase-like" evidence="1">
    <location>
        <begin position="5"/>
        <end position="184"/>
    </location>
</feature>
<feature type="binding site" evidence="1">
    <location>
        <begin position="12"/>
        <end position="19"/>
    </location>
    <ligand>
        <name>ATP</name>
        <dbReference type="ChEBI" id="CHEBI:30616"/>
    </ligand>
</feature>
<evidence type="ECO:0000255" key="1">
    <source>
        <dbReference type="HAMAP-Rule" id="MF_00328"/>
    </source>
</evidence>
<protein>
    <recommendedName>
        <fullName evidence="1">Guanylate kinase</fullName>
        <ecNumber evidence="1">2.7.4.8</ecNumber>
    </recommendedName>
    <alternativeName>
        <fullName evidence="1">GMP kinase</fullName>
    </alternativeName>
</protein>
<name>KGUA_SHEVD</name>
<comment type="function">
    <text evidence="1">Essential for recycling GMP and indirectly, cGMP.</text>
</comment>
<comment type="catalytic activity">
    <reaction evidence="1">
        <text>GMP + ATP = GDP + ADP</text>
        <dbReference type="Rhea" id="RHEA:20780"/>
        <dbReference type="ChEBI" id="CHEBI:30616"/>
        <dbReference type="ChEBI" id="CHEBI:58115"/>
        <dbReference type="ChEBI" id="CHEBI:58189"/>
        <dbReference type="ChEBI" id="CHEBI:456216"/>
        <dbReference type="EC" id="2.7.4.8"/>
    </reaction>
</comment>
<comment type="subcellular location">
    <subcellularLocation>
        <location evidence="1">Cytoplasm</location>
    </subcellularLocation>
</comment>
<comment type="similarity">
    <text evidence="1">Belongs to the guanylate kinase family.</text>
</comment>
<gene>
    <name evidence="1" type="primary">gmk</name>
    <name type="ordered locus">SVI_4076</name>
</gene>
<proteinExistence type="inferred from homology"/>
<dbReference type="EC" id="2.7.4.8" evidence="1"/>
<dbReference type="EMBL" id="AB114448">
    <property type="protein sequence ID" value="BAC79233.1"/>
    <property type="molecule type" value="Genomic_DNA"/>
</dbReference>
<dbReference type="EMBL" id="AP011177">
    <property type="protein sequence ID" value="BAJ04047.1"/>
    <property type="molecule type" value="Genomic_DNA"/>
</dbReference>
<dbReference type="RefSeq" id="WP_013053338.1">
    <property type="nucleotide sequence ID" value="NC_014012.1"/>
</dbReference>
<dbReference type="SMR" id="Q7WZE5"/>
<dbReference type="STRING" id="637905.SVI_4076"/>
<dbReference type="KEGG" id="svo:SVI_4076"/>
<dbReference type="eggNOG" id="COG0194">
    <property type="taxonomic scope" value="Bacteria"/>
</dbReference>
<dbReference type="HOGENOM" id="CLU_001715_1_0_6"/>
<dbReference type="OrthoDB" id="9808150at2"/>
<dbReference type="Proteomes" id="UP000002350">
    <property type="component" value="Chromosome"/>
</dbReference>
<dbReference type="GO" id="GO:0005829">
    <property type="term" value="C:cytosol"/>
    <property type="evidence" value="ECO:0007669"/>
    <property type="project" value="TreeGrafter"/>
</dbReference>
<dbReference type="GO" id="GO:0005524">
    <property type="term" value="F:ATP binding"/>
    <property type="evidence" value="ECO:0007669"/>
    <property type="project" value="UniProtKB-UniRule"/>
</dbReference>
<dbReference type="GO" id="GO:0004385">
    <property type="term" value="F:guanylate kinase activity"/>
    <property type="evidence" value="ECO:0007669"/>
    <property type="project" value="UniProtKB-UniRule"/>
</dbReference>
<dbReference type="CDD" id="cd00071">
    <property type="entry name" value="GMPK"/>
    <property type="match status" value="1"/>
</dbReference>
<dbReference type="FunFam" id="3.40.50.300:FF:000855">
    <property type="entry name" value="Guanylate kinase"/>
    <property type="match status" value="1"/>
</dbReference>
<dbReference type="FunFam" id="3.30.63.10:FF:000002">
    <property type="entry name" value="Guanylate kinase 1"/>
    <property type="match status" value="1"/>
</dbReference>
<dbReference type="Gene3D" id="3.30.63.10">
    <property type="entry name" value="Guanylate Kinase phosphate binding domain"/>
    <property type="match status" value="1"/>
</dbReference>
<dbReference type="Gene3D" id="3.40.50.300">
    <property type="entry name" value="P-loop containing nucleotide triphosphate hydrolases"/>
    <property type="match status" value="1"/>
</dbReference>
<dbReference type="HAMAP" id="MF_00328">
    <property type="entry name" value="Guanylate_kinase"/>
    <property type="match status" value="1"/>
</dbReference>
<dbReference type="InterPro" id="IPR008145">
    <property type="entry name" value="GK/Ca_channel_bsu"/>
</dbReference>
<dbReference type="InterPro" id="IPR008144">
    <property type="entry name" value="Guanylate_kin-like_dom"/>
</dbReference>
<dbReference type="InterPro" id="IPR017665">
    <property type="entry name" value="Guanylate_kinase"/>
</dbReference>
<dbReference type="InterPro" id="IPR020590">
    <property type="entry name" value="Guanylate_kinase_CS"/>
</dbReference>
<dbReference type="InterPro" id="IPR027417">
    <property type="entry name" value="P-loop_NTPase"/>
</dbReference>
<dbReference type="NCBIfam" id="TIGR03263">
    <property type="entry name" value="guanyl_kin"/>
    <property type="match status" value="1"/>
</dbReference>
<dbReference type="PANTHER" id="PTHR23117:SF13">
    <property type="entry name" value="GUANYLATE KINASE"/>
    <property type="match status" value="1"/>
</dbReference>
<dbReference type="PANTHER" id="PTHR23117">
    <property type="entry name" value="GUANYLATE KINASE-RELATED"/>
    <property type="match status" value="1"/>
</dbReference>
<dbReference type="Pfam" id="PF00625">
    <property type="entry name" value="Guanylate_kin"/>
    <property type="match status" value="1"/>
</dbReference>
<dbReference type="SMART" id="SM00072">
    <property type="entry name" value="GuKc"/>
    <property type="match status" value="1"/>
</dbReference>
<dbReference type="SUPFAM" id="SSF52540">
    <property type="entry name" value="P-loop containing nucleoside triphosphate hydrolases"/>
    <property type="match status" value="1"/>
</dbReference>
<dbReference type="PROSITE" id="PS00856">
    <property type="entry name" value="GUANYLATE_KINASE_1"/>
    <property type="match status" value="1"/>
</dbReference>
<dbReference type="PROSITE" id="PS50052">
    <property type="entry name" value="GUANYLATE_KINASE_2"/>
    <property type="match status" value="1"/>
</dbReference>
<accession>Q7WZE5</accession>
<accession>D4ZDY6</accession>
<sequence>MTARGNLFIVSAPSGAGKSSLISALLQDKPADKQVSVSHTTRQPRPGEVNGQHYHFVTKEEFKALITENAFFEWAEVFGNYYGTSRKVIEQTLTDGIDVFLDIDWQGAQQVKKVMPEAIGIFILPPSRTELEKRLTGRGQDSKEVIASRMAQAASEISHYNEYDFIIINDDFDTALADLVAIIRSQRLTDTGQIHAHNDMIQGLLAD</sequence>